<name>GPDA_PSYIN</name>
<organism>
    <name type="scientific">Psychromonas ingrahamii (strain DSM 17664 / CCUG 51855 / 37)</name>
    <dbReference type="NCBI Taxonomy" id="357804"/>
    <lineage>
        <taxon>Bacteria</taxon>
        <taxon>Pseudomonadati</taxon>
        <taxon>Pseudomonadota</taxon>
        <taxon>Gammaproteobacteria</taxon>
        <taxon>Alteromonadales</taxon>
        <taxon>Psychromonadaceae</taxon>
        <taxon>Psychromonas</taxon>
    </lineage>
</organism>
<feature type="chain" id="PRO_1000123175" description="Glycerol-3-phosphate dehydrogenase [NAD(P)+]">
    <location>
        <begin position="1"/>
        <end position="334"/>
    </location>
</feature>
<feature type="active site" description="Proton acceptor" evidence="1">
    <location>
        <position position="194"/>
    </location>
</feature>
<feature type="binding site" evidence="1">
    <location>
        <position position="14"/>
    </location>
    <ligand>
        <name>NADPH</name>
        <dbReference type="ChEBI" id="CHEBI:57783"/>
    </ligand>
</feature>
<feature type="binding site" evidence="1">
    <location>
        <position position="15"/>
    </location>
    <ligand>
        <name>NADPH</name>
        <dbReference type="ChEBI" id="CHEBI:57783"/>
    </ligand>
</feature>
<feature type="binding site" evidence="1">
    <location>
        <position position="35"/>
    </location>
    <ligand>
        <name>NADPH</name>
        <dbReference type="ChEBI" id="CHEBI:57783"/>
    </ligand>
</feature>
<feature type="binding site" evidence="1">
    <location>
        <position position="109"/>
    </location>
    <ligand>
        <name>NADPH</name>
        <dbReference type="ChEBI" id="CHEBI:57783"/>
    </ligand>
</feature>
<feature type="binding site" evidence="1">
    <location>
        <position position="109"/>
    </location>
    <ligand>
        <name>sn-glycerol 3-phosphate</name>
        <dbReference type="ChEBI" id="CHEBI:57597"/>
    </ligand>
</feature>
<feature type="binding site" evidence="1">
    <location>
        <position position="138"/>
    </location>
    <ligand>
        <name>sn-glycerol 3-phosphate</name>
        <dbReference type="ChEBI" id="CHEBI:57597"/>
    </ligand>
</feature>
<feature type="binding site" evidence="1">
    <location>
        <position position="140"/>
    </location>
    <ligand>
        <name>sn-glycerol 3-phosphate</name>
        <dbReference type="ChEBI" id="CHEBI:57597"/>
    </ligand>
</feature>
<feature type="binding site" evidence="1">
    <location>
        <position position="142"/>
    </location>
    <ligand>
        <name>NADPH</name>
        <dbReference type="ChEBI" id="CHEBI:57783"/>
    </ligand>
</feature>
<feature type="binding site" evidence="1">
    <location>
        <position position="194"/>
    </location>
    <ligand>
        <name>sn-glycerol 3-phosphate</name>
        <dbReference type="ChEBI" id="CHEBI:57597"/>
    </ligand>
</feature>
<feature type="binding site" evidence="1">
    <location>
        <position position="247"/>
    </location>
    <ligand>
        <name>sn-glycerol 3-phosphate</name>
        <dbReference type="ChEBI" id="CHEBI:57597"/>
    </ligand>
</feature>
<feature type="binding site" evidence="1">
    <location>
        <position position="257"/>
    </location>
    <ligand>
        <name>sn-glycerol 3-phosphate</name>
        <dbReference type="ChEBI" id="CHEBI:57597"/>
    </ligand>
</feature>
<feature type="binding site" evidence="1">
    <location>
        <position position="258"/>
    </location>
    <ligand>
        <name>NADPH</name>
        <dbReference type="ChEBI" id="CHEBI:57783"/>
    </ligand>
</feature>
<feature type="binding site" evidence="1">
    <location>
        <position position="258"/>
    </location>
    <ligand>
        <name>sn-glycerol 3-phosphate</name>
        <dbReference type="ChEBI" id="CHEBI:57597"/>
    </ligand>
</feature>
<feature type="binding site" evidence="1">
    <location>
        <position position="259"/>
    </location>
    <ligand>
        <name>sn-glycerol 3-phosphate</name>
        <dbReference type="ChEBI" id="CHEBI:57597"/>
    </ligand>
</feature>
<feature type="binding site" evidence="1">
    <location>
        <position position="282"/>
    </location>
    <ligand>
        <name>NADPH</name>
        <dbReference type="ChEBI" id="CHEBI:57783"/>
    </ligand>
</feature>
<feature type="binding site" evidence="1">
    <location>
        <position position="284"/>
    </location>
    <ligand>
        <name>NADPH</name>
        <dbReference type="ChEBI" id="CHEBI:57783"/>
    </ligand>
</feature>
<accession>A1SZH9</accession>
<comment type="function">
    <text evidence="1">Catalyzes the reduction of the glycolytic intermediate dihydroxyacetone phosphate (DHAP) to sn-glycerol 3-phosphate (G3P), the key precursor for phospholipid synthesis.</text>
</comment>
<comment type="catalytic activity">
    <reaction evidence="1">
        <text>sn-glycerol 3-phosphate + NAD(+) = dihydroxyacetone phosphate + NADH + H(+)</text>
        <dbReference type="Rhea" id="RHEA:11092"/>
        <dbReference type="ChEBI" id="CHEBI:15378"/>
        <dbReference type="ChEBI" id="CHEBI:57540"/>
        <dbReference type="ChEBI" id="CHEBI:57597"/>
        <dbReference type="ChEBI" id="CHEBI:57642"/>
        <dbReference type="ChEBI" id="CHEBI:57945"/>
        <dbReference type="EC" id="1.1.1.94"/>
    </reaction>
    <physiologicalReaction direction="right-to-left" evidence="1">
        <dbReference type="Rhea" id="RHEA:11094"/>
    </physiologicalReaction>
</comment>
<comment type="catalytic activity">
    <reaction evidence="1">
        <text>sn-glycerol 3-phosphate + NADP(+) = dihydroxyacetone phosphate + NADPH + H(+)</text>
        <dbReference type="Rhea" id="RHEA:11096"/>
        <dbReference type="ChEBI" id="CHEBI:15378"/>
        <dbReference type="ChEBI" id="CHEBI:57597"/>
        <dbReference type="ChEBI" id="CHEBI:57642"/>
        <dbReference type="ChEBI" id="CHEBI:57783"/>
        <dbReference type="ChEBI" id="CHEBI:58349"/>
        <dbReference type="EC" id="1.1.1.94"/>
    </reaction>
    <physiologicalReaction direction="right-to-left" evidence="1">
        <dbReference type="Rhea" id="RHEA:11098"/>
    </physiologicalReaction>
</comment>
<comment type="pathway">
    <text evidence="1">Membrane lipid metabolism; glycerophospholipid metabolism.</text>
</comment>
<comment type="subcellular location">
    <subcellularLocation>
        <location evidence="1">Cytoplasm</location>
    </subcellularLocation>
</comment>
<comment type="similarity">
    <text evidence="1">Belongs to the NAD-dependent glycerol-3-phosphate dehydrogenase family.</text>
</comment>
<evidence type="ECO:0000255" key="1">
    <source>
        <dbReference type="HAMAP-Rule" id="MF_00394"/>
    </source>
</evidence>
<sequence>MADNIAITVLGAGSYGSALAVSLARNGHPTLLWGHQEDHIKRLQADRENKKFLPNIKFPELLTPEVNLKVCLAATRNILLVVPSHVFALVLQQIKPFLTPQHRIAWATKGLEAKTGRLLQEVATDILGQHYPLAVISGPTFAMEVAKGLPTAVAVAGSESKFTQDIAALFHNNRNFRTYISDDFTAVQLGGAVKNVIAIGAGLADGLGFGANARTALITRGLAELTRLGVALGAKESSFMGMAGLGDLVLTCTDNQSRNRRFGLALGQGKGINAAQIEIGQVVEGYRNTEEVYNLSHRIGIEMPICEQIYYVLYQDKAVKQAAMDLLSRSPKDE</sequence>
<gene>
    <name evidence="1" type="primary">gpsA</name>
    <name type="ordered locus">Ping_3207</name>
</gene>
<keyword id="KW-0963">Cytoplasm</keyword>
<keyword id="KW-0444">Lipid biosynthesis</keyword>
<keyword id="KW-0443">Lipid metabolism</keyword>
<keyword id="KW-0520">NAD</keyword>
<keyword id="KW-0521">NADP</keyword>
<keyword id="KW-0547">Nucleotide-binding</keyword>
<keyword id="KW-0560">Oxidoreductase</keyword>
<keyword id="KW-0594">Phospholipid biosynthesis</keyword>
<keyword id="KW-1208">Phospholipid metabolism</keyword>
<keyword id="KW-1185">Reference proteome</keyword>
<proteinExistence type="inferred from homology"/>
<reference key="1">
    <citation type="journal article" date="2008" name="BMC Genomics">
        <title>Genomics of an extreme psychrophile, Psychromonas ingrahamii.</title>
        <authorList>
            <person name="Riley M."/>
            <person name="Staley J.T."/>
            <person name="Danchin A."/>
            <person name="Wang T.Z."/>
            <person name="Brettin T.S."/>
            <person name="Hauser L.J."/>
            <person name="Land M.L."/>
            <person name="Thompson L.S."/>
        </authorList>
    </citation>
    <scope>NUCLEOTIDE SEQUENCE [LARGE SCALE GENOMIC DNA]</scope>
    <source>
        <strain>DSM 17664 / CCUG 51855 / 37</strain>
    </source>
</reference>
<dbReference type="EC" id="1.1.1.94" evidence="1"/>
<dbReference type="EMBL" id="CP000510">
    <property type="protein sequence ID" value="ABM04894.1"/>
    <property type="molecule type" value="Genomic_DNA"/>
</dbReference>
<dbReference type="RefSeq" id="WP_011771446.1">
    <property type="nucleotide sequence ID" value="NC_008709.1"/>
</dbReference>
<dbReference type="SMR" id="A1SZH9"/>
<dbReference type="STRING" id="357804.Ping_3207"/>
<dbReference type="KEGG" id="pin:Ping_3207"/>
<dbReference type="eggNOG" id="COG0240">
    <property type="taxonomic scope" value="Bacteria"/>
</dbReference>
<dbReference type="HOGENOM" id="CLU_033449_0_2_6"/>
<dbReference type="OrthoDB" id="9812273at2"/>
<dbReference type="UniPathway" id="UPA00940"/>
<dbReference type="Proteomes" id="UP000000639">
    <property type="component" value="Chromosome"/>
</dbReference>
<dbReference type="GO" id="GO:0005829">
    <property type="term" value="C:cytosol"/>
    <property type="evidence" value="ECO:0007669"/>
    <property type="project" value="TreeGrafter"/>
</dbReference>
<dbReference type="GO" id="GO:0047952">
    <property type="term" value="F:glycerol-3-phosphate dehydrogenase [NAD(P)+] activity"/>
    <property type="evidence" value="ECO:0007669"/>
    <property type="project" value="UniProtKB-UniRule"/>
</dbReference>
<dbReference type="GO" id="GO:0051287">
    <property type="term" value="F:NAD binding"/>
    <property type="evidence" value="ECO:0007669"/>
    <property type="project" value="InterPro"/>
</dbReference>
<dbReference type="GO" id="GO:0005975">
    <property type="term" value="P:carbohydrate metabolic process"/>
    <property type="evidence" value="ECO:0007669"/>
    <property type="project" value="InterPro"/>
</dbReference>
<dbReference type="GO" id="GO:0046167">
    <property type="term" value="P:glycerol-3-phosphate biosynthetic process"/>
    <property type="evidence" value="ECO:0007669"/>
    <property type="project" value="UniProtKB-UniRule"/>
</dbReference>
<dbReference type="GO" id="GO:0046168">
    <property type="term" value="P:glycerol-3-phosphate catabolic process"/>
    <property type="evidence" value="ECO:0007669"/>
    <property type="project" value="InterPro"/>
</dbReference>
<dbReference type="GO" id="GO:0046474">
    <property type="term" value="P:glycerophospholipid biosynthetic process"/>
    <property type="evidence" value="ECO:0007669"/>
    <property type="project" value="TreeGrafter"/>
</dbReference>
<dbReference type="FunFam" id="1.10.1040.10:FF:000001">
    <property type="entry name" value="Glycerol-3-phosphate dehydrogenase [NAD(P)+]"/>
    <property type="match status" value="1"/>
</dbReference>
<dbReference type="FunFam" id="3.40.50.720:FF:000019">
    <property type="entry name" value="Glycerol-3-phosphate dehydrogenase [NAD(P)+]"/>
    <property type="match status" value="1"/>
</dbReference>
<dbReference type="Gene3D" id="1.10.1040.10">
    <property type="entry name" value="N-(1-d-carboxylethyl)-l-norvaline Dehydrogenase, domain 2"/>
    <property type="match status" value="1"/>
</dbReference>
<dbReference type="Gene3D" id="3.40.50.720">
    <property type="entry name" value="NAD(P)-binding Rossmann-like Domain"/>
    <property type="match status" value="1"/>
</dbReference>
<dbReference type="HAMAP" id="MF_00394">
    <property type="entry name" value="NAD_Glyc3P_dehydrog"/>
    <property type="match status" value="1"/>
</dbReference>
<dbReference type="InterPro" id="IPR008927">
    <property type="entry name" value="6-PGluconate_DH-like_C_sf"/>
</dbReference>
<dbReference type="InterPro" id="IPR013328">
    <property type="entry name" value="6PGD_dom2"/>
</dbReference>
<dbReference type="InterPro" id="IPR006168">
    <property type="entry name" value="G3P_DH_NAD-dep"/>
</dbReference>
<dbReference type="InterPro" id="IPR006109">
    <property type="entry name" value="G3P_DH_NAD-dep_C"/>
</dbReference>
<dbReference type="InterPro" id="IPR011128">
    <property type="entry name" value="G3P_DH_NAD-dep_N"/>
</dbReference>
<dbReference type="InterPro" id="IPR036291">
    <property type="entry name" value="NAD(P)-bd_dom_sf"/>
</dbReference>
<dbReference type="NCBIfam" id="NF000939">
    <property type="entry name" value="PRK00094.1-1"/>
    <property type="match status" value="1"/>
</dbReference>
<dbReference type="NCBIfam" id="NF000940">
    <property type="entry name" value="PRK00094.1-2"/>
    <property type="match status" value="1"/>
</dbReference>
<dbReference type="NCBIfam" id="NF000942">
    <property type="entry name" value="PRK00094.1-4"/>
    <property type="match status" value="1"/>
</dbReference>
<dbReference type="PANTHER" id="PTHR11728">
    <property type="entry name" value="GLYCEROL-3-PHOSPHATE DEHYDROGENASE"/>
    <property type="match status" value="1"/>
</dbReference>
<dbReference type="PANTHER" id="PTHR11728:SF1">
    <property type="entry name" value="GLYCEROL-3-PHOSPHATE DEHYDROGENASE [NAD(+)] 2, CHLOROPLASTIC"/>
    <property type="match status" value="1"/>
</dbReference>
<dbReference type="Pfam" id="PF07479">
    <property type="entry name" value="NAD_Gly3P_dh_C"/>
    <property type="match status" value="1"/>
</dbReference>
<dbReference type="Pfam" id="PF01210">
    <property type="entry name" value="NAD_Gly3P_dh_N"/>
    <property type="match status" value="1"/>
</dbReference>
<dbReference type="PIRSF" id="PIRSF000114">
    <property type="entry name" value="Glycerol-3-P_dh"/>
    <property type="match status" value="1"/>
</dbReference>
<dbReference type="PRINTS" id="PR00077">
    <property type="entry name" value="GPDHDRGNASE"/>
</dbReference>
<dbReference type="SUPFAM" id="SSF48179">
    <property type="entry name" value="6-phosphogluconate dehydrogenase C-terminal domain-like"/>
    <property type="match status" value="1"/>
</dbReference>
<dbReference type="SUPFAM" id="SSF51735">
    <property type="entry name" value="NAD(P)-binding Rossmann-fold domains"/>
    <property type="match status" value="1"/>
</dbReference>
<dbReference type="PROSITE" id="PS00957">
    <property type="entry name" value="NAD_G3PDH"/>
    <property type="match status" value="1"/>
</dbReference>
<protein>
    <recommendedName>
        <fullName evidence="1">Glycerol-3-phosphate dehydrogenase [NAD(P)+]</fullName>
        <ecNumber evidence="1">1.1.1.94</ecNumber>
    </recommendedName>
    <alternativeName>
        <fullName evidence="1">NAD(P)(+)-dependent glycerol-3-phosphate dehydrogenase</fullName>
    </alternativeName>
    <alternativeName>
        <fullName evidence="1">NAD(P)H-dependent dihydroxyacetone-phosphate reductase</fullName>
    </alternativeName>
</protein>